<proteinExistence type="inferred from homology"/>
<feature type="chain" id="PRO_0000144963" description="Movement protein">
    <location>
        <begin position="1"/>
        <end position="257"/>
    </location>
</feature>
<feature type="region of interest" description="Disordered" evidence="3">
    <location>
        <begin position="212"/>
        <end position="257"/>
    </location>
</feature>
<feature type="compositionally biased region" description="Basic and acidic residues" evidence="3">
    <location>
        <begin position="224"/>
        <end position="242"/>
    </location>
</feature>
<feature type="compositionally biased region" description="Low complexity" evidence="3">
    <location>
        <begin position="247"/>
        <end position="257"/>
    </location>
</feature>
<organism>
    <name type="scientific">Pepper mild mottle virus (strain Spain)</name>
    <name type="common">PMMV-S</name>
    <dbReference type="NCBI Taxonomy" id="31745"/>
    <lineage>
        <taxon>Viruses</taxon>
        <taxon>Riboviria</taxon>
        <taxon>Orthornavirae</taxon>
        <taxon>Kitrinoviricota</taxon>
        <taxon>Alsuviricetes</taxon>
        <taxon>Martellivirales</taxon>
        <taxon>Virgaviridae</taxon>
        <taxon>Tobamovirus</taxon>
        <taxon>Pepper mild mottle virus</taxon>
    </lineage>
</organism>
<organismHost>
    <name type="scientific">Capsicum annuum</name>
    <name type="common">Capsicum pepper</name>
    <dbReference type="NCBI Taxonomy" id="4072"/>
</organismHost>
<reference key="1">
    <citation type="journal article" date="1991" name="J. Gen. Virol.">
        <title>Nucleotide sequence of the genomic RNA of pepper mild mottle virus, a resistance-breaking tobamovirus in pepper.</title>
        <authorList>
            <person name="Alonso E."/>
            <person name="Garcia-Luque I."/>
            <person name="de la Cruz A."/>
            <person name="Wicke B."/>
            <person name="Avila-Rincon M.J."/>
            <person name="Serra M.T."/>
            <person name="Castresana C."/>
            <person name="Diaz-Ruiz J.R."/>
        </authorList>
    </citation>
    <scope>NUCLEOTIDE SEQUENCE [GENOMIC RNA]</scope>
</reference>
<name>MVP_PMMVS</name>
<evidence type="ECO:0000250" key="1">
    <source>
        <dbReference type="UniProtKB" id="P03583"/>
    </source>
</evidence>
<evidence type="ECO:0000250" key="2">
    <source>
        <dbReference type="UniProtKB" id="P69513"/>
    </source>
</evidence>
<evidence type="ECO:0000256" key="3">
    <source>
        <dbReference type="SAM" id="MobiDB-lite"/>
    </source>
</evidence>
<evidence type="ECO:0000305" key="4"/>
<gene>
    <name type="primary">MP</name>
</gene>
<sequence>MALVVKDDVKISEFINLSAAEKFLPAVMTSVKTVRISKVDKVIAMENDSLSDVNLLKGVKLVKDGYVCLAGLVVSGEWNLPDNCRGGVSVCLVDKRMQRDDEATLGSYRTSAAKKRFAFKLIPNYSITTADAERKVWQVLVNIRGVAMEKGFCPLSLEFVSVCIVHKSNIKLGLREKITSVSEGGPVELTEAVVDEFIESVPMADRLRKFRNQSKKGSNKYVGKRNDNKGLNKEGKLFDKVRIGQNSESSDAESSSF</sequence>
<accession>P29097</accession>
<protein>
    <recommendedName>
        <fullName>Movement protein</fullName>
    </recommendedName>
    <alternativeName>
        <fullName>30 kDa protein</fullName>
    </alternativeName>
    <alternativeName>
        <fullName>Cell-to-cell transport protein</fullName>
    </alternativeName>
</protein>
<keyword id="KW-1031">Host cell junction</keyword>
<keyword id="KW-1035">Host cytoplasm</keyword>
<keyword id="KW-1037">Host cytoskeleton</keyword>
<keyword id="KW-0694">RNA-binding</keyword>
<keyword id="KW-0813">Transport</keyword>
<keyword id="KW-0916">Viral movement protein</keyword>
<dbReference type="EMBL" id="M81413">
    <property type="protein sequence ID" value="AAB02336.1"/>
    <property type="molecule type" value="Genomic_RNA"/>
</dbReference>
<dbReference type="PIR" id="JQ1314">
    <property type="entry name" value="WMTMP3"/>
</dbReference>
<dbReference type="RefSeq" id="NP_619742.1">
    <property type="nucleotide sequence ID" value="NC_003630.1"/>
</dbReference>
<dbReference type="KEGG" id="vg:1724828"/>
<dbReference type="Proteomes" id="UP000000476">
    <property type="component" value="Segment"/>
</dbReference>
<dbReference type="GO" id="GO:0030430">
    <property type="term" value="C:host cell cytoplasm"/>
    <property type="evidence" value="ECO:0007669"/>
    <property type="project" value="UniProtKB-KW"/>
</dbReference>
<dbReference type="GO" id="GO:0044219">
    <property type="term" value="C:host cell plasmodesma"/>
    <property type="evidence" value="ECO:0007669"/>
    <property type="project" value="UniProtKB-SubCell"/>
</dbReference>
<dbReference type="GO" id="GO:0044163">
    <property type="term" value="C:host cytoskeleton"/>
    <property type="evidence" value="ECO:0007669"/>
    <property type="project" value="UniProtKB-SubCell"/>
</dbReference>
<dbReference type="GO" id="GO:0003723">
    <property type="term" value="F:RNA binding"/>
    <property type="evidence" value="ECO:0007669"/>
    <property type="project" value="UniProtKB-KW"/>
</dbReference>
<dbReference type="GO" id="GO:0046740">
    <property type="term" value="P:transport of virus in host, cell to cell"/>
    <property type="evidence" value="ECO:0007669"/>
    <property type="project" value="UniProtKB-KW"/>
</dbReference>
<dbReference type="InterPro" id="IPR001022">
    <property type="entry name" value="TMV_movement"/>
</dbReference>
<dbReference type="InterPro" id="IPR028919">
    <property type="entry name" value="Viral_movement"/>
</dbReference>
<dbReference type="Pfam" id="PF01107">
    <property type="entry name" value="MP"/>
    <property type="match status" value="1"/>
</dbReference>
<dbReference type="PRINTS" id="PR00964">
    <property type="entry name" value="MOVEMENT"/>
</dbReference>
<comment type="function">
    <text evidence="1 2">Transports viral genome to neighboring plant cells directly through plasmosdesmata, without any budding. The movement protein allows efficient cell to cell propagation, by bypassing the host cell wall barrier. Forms a ribonucleoprotein complex with viral RNA. Binds microtubules and modulates microtubule stability. Can bind double-stranded DNA.</text>
</comment>
<comment type="subcellular location">
    <subcellularLocation>
        <location evidence="2">Host cytoplasm</location>
        <location evidence="2">Host cytoskeleton</location>
    </subcellularLocation>
    <subcellularLocation>
        <location evidence="2">Host cell junction</location>
        <location evidence="2">Host plasmodesma</location>
    </subcellularLocation>
</comment>
<comment type="similarity">
    <text evidence="4">Belongs to the tobamovirus movement protein family.</text>
</comment>